<accession>A9HJ50</accession>
<accession>B5ZJZ8</accession>
<reference key="1">
    <citation type="journal article" date="2009" name="BMC Genomics">
        <title>Complete genome sequence of the sugarcane nitrogen-fixing endophyte Gluconacetobacter diazotrophicus Pal5.</title>
        <authorList>
            <person name="Bertalan M."/>
            <person name="Albano R."/>
            <person name="de Padua V."/>
            <person name="Rouws L."/>
            <person name="Rojas C."/>
            <person name="Hemerly A."/>
            <person name="Teixeira K."/>
            <person name="Schwab S."/>
            <person name="Araujo J."/>
            <person name="Oliveira A."/>
            <person name="Franca L."/>
            <person name="Magalhaes V."/>
            <person name="Alqueres S."/>
            <person name="Cardoso A."/>
            <person name="Almeida W."/>
            <person name="Loureiro M.M."/>
            <person name="Nogueira E."/>
            <person name="Cidade D."/>
            <person name="Oliveira D."/>
            <person name="Simao T."/>
            <person name="Macedo J."/>
            <person name="Valadao A."/>
            <person name="Dreschsel M."/>
            <person name="Freitas F."/>
            <person name="Vidal M."/>
            <person name="Guedes H."/>
            <person name="Rodrigues E."/>
            <person name="Meneses C."/>
            <person name="Brioso P."/>
            <person name="Pozzer L."/>
            <person name="Figueiredo D."/>
            <person name="Montano H."/>
            <person name="Junior J."/>
            <person name="de Souza Filho G."/>
            <person name="Martin Quintana Flores V."/>
            <person name="Ferreira B."/>
            <person name="Branco A."/>
            <person name="Gonzalez P."/>
            <person name="Guillobel H."/>
            <person name="Lemos M."/>
            <person name="Seibel L."/>
            <person name="Macedo J."/>
            <person name="Alves-Ferreira M."/>
            <person name="Sachetto-Martins G."/>
            <person name="Coelho A."/>
            <person name="Santos E."/>
            <person name="Amaral G."/>
            <person name="Neves A."/>
            <person name="Pacheco A.B."/>
            <person name="Carvalho D."/>
            <person name="Lery L."/>
            <person name="Bisch P."/>
            <person name="Rossle S.C."/>
            <person name="Urmenyi T."/>
            <person name="Rael Pereira A."/>
            <person name="Silva R."/>
            <person name="Rondinelli E."/>
            <person name="von Kruger W."/>
            <person name="Martins O."/>
            <person name="Baldani J.I."/>
            <person name="Ferreira P.C."/>
        </authorList>
    </citation>
    <scope>NUCLEOTIDE SEQUENCE [LARGE SCALE GENOMIC DNA]</scope>
    <source>
        <strain>ATCC 49037 / DSM 5601 / CCUG 37298 / CIP 103539 / LMG 7603 / PAl5</strain>
    </source>
</reference>
<reference key="2">
    <citation type="journal article" date="2010" name="Stand. Genomic Sci.">
        <title>Two genome sequences of the same bacterial strain, Gluconacetobacter diazotrophicus PAl 5, suggest a new standard in genome sequence submission.</title>
        <authorList>
            <person name="Giongo A."/>
            <person name="Tyler H.L."/>
            <person name="Zipperer U.N."/>
            <person name="Triplett E.W."/>
        </authorList>
    </citation>
    <scope>NUCLEOTIDE SEQUENCE [LARGE SCALE GENOMIC DNA]</scope>
    <source>
        <strain>ATCC 49037 / DSM 5601 / CCUG 37298 / CIP 103539 / LMG 7603 / PAl5</strain>
    </source>
</reference>
<organism>
    <name type="scientific">Gluconacetobacter diazotrophicus (strain ATCC 49037 / DSM 5601 / CCUG 37298 / CIP 103539 / LMG 7603 / PAl5)</name>
    <dbReference type="NCBI Taxonomy" id="272568"/>
    <lineage>
        <taxon>Bacteria</taxon>
        <taxon>Pseudomonadati</taxon>
        <taxon>Pseudomonadota</taxon>
        <taxon>Alphaproteobacteria</taxon>
        <taxon>Acetobacterales</taxon>
        <taxon>Acetobacteraceae</taxon>
        <taxon>Gluconacetobacter</taxon>
    </lineage>
</organism>
<proteinExistence type="inferred from homology"/>
<dbReference type="EMBL" id="AM889285">
    <property type="protein sequence ID" value="CAP55858.1"/>
    <property type="molecule type" value="Genomic_DNA"/>
</dbReference>
<dbReference type="EMBL" id="CP001189">
    <property type="protein sequence ID" value="ACI49937.1"/>
    <property type="molecule type" value="Genomic_DNA"/>
</dbReference>
<dbReference type="RefSeq" id="WP_012225534.1">
    <property type="nucleotide sequence ID" value="NC_010125.1"/>
</dbReference>
<dbReference type="SMR" id="A9HJ50"/>
<dbReference type="STRING" id="272568.GDI1915"/>
<dbReference type="KEGG" id="gdi:GDI1915"/>
<dbReference type="KEGG" id="gdj:Gdia_0137"/>
<dbReference type="eggNOG" id="COG0216">
    <property type="taxonomic scope" value="Bacteria"/>
</dbReference>
<dbReference type="HOGENOM" id="CLU_036856_0_1_5"/>
<dbReference type="OrthoDB" id="9806673at2"/>
<dbReference type="Proteomes" id="UP000001176">
    <property type="component" value="Chromosome"/>
</dbReference>
<dbReference type="GO" id="GO:0005737">
    <property type="term" value="C:cytoplasm"/>
    <property type="evidence" value="ECO:0007669"/>
    <property type="project" value="UniProtKB-SubCell"/>
</dbReference>
<dbReference type="GO" id="GO:0016149">
    <property type="term" value="F:translation release factor activity, codon specific"/>
    <property type="evidence" value="ECO:0007669"/>
    <property type="project" value="UniProtKB-UniRule"/>
</dbReference>
<dbReference type="FunFam" id="3.30.160.20:FF:000004">
    <property type="entry name" value="Peptide chain release factor 1"/>
    <property type="match status" value="1"/>
</dbReference>
<dbReference type="FunFam" id="3.30.70.1660:FF:000002">
    <property type="entry name" value="Peptide chain release factor 1"/>
    <property type="match status" value="1"/>
</dbReference>
<dbReference type="FunFam" id="3.30.70.1660:FF:000004">
    <property type="entry name" value="Peptide chain release factor 1"/>
    <property type="match status" value="1"/>
</dbReference>
<dbReference type="Gene3D" id="3.30.160.20">
    <property type="match status" value="1"/>
</dbReference>
<dbReference type="Gene3D" id="3.30.70.1660">
    <property type="match status" value="2"/>
</dbReference>
<dbReference type="Gene3D" id="6.10.140.1950">
    <property type="match status" value="1"/>
</dbReference>
<dbReference type="HAMAP" id="MF_00093">
    <property type="entry name" value="Rel_fac_1"/>
    <property type="match status" value="1"/>
</dbReference>
<dbReference type="InterPro" id="IPR005139">
    <property type="entry name" value="PCRF"/>
</dbReference>
<dbReference type="InterPro" id="IPR000352">
    <property type="entry name" value="Pep_chain_release_fac_I"/>
</dbReference>
<dbReference type="InterPro" id="IPR045853">
    <property type="entry name" value="Pep_chain_release_fac_I_sf"/>
</dbReference>
<dbReference type="InterPro" id="IPR050057">
    <property type="entry name" value="Prokaryotic/Mito_RF"/>
</dbReference>
<dbReference type="InterPro" id="IPR004373">
    <property type="entry name" value="RF-1"/>
</dbReference>
<dbReference type="NCBIfam" id="TIGR00019">
    <property type="entry name" value="prfA"/>
    <property type="match status" value="1"/>
</dbReference>
<dbReference type="NCBIfam" id="NF001859">
    <property type="entry name" value="PRK00591.1"/>
    <property type="match status" value="1"/>
</dbReference>
<dbReference type="PANTHER" id="PTHR43804">
    <property type="entry name" value="LD18447P"/>
    <property type="match status" value="1"/>
</dbReference>
<dbReference type="PANTHER" id="PTHR43804:SF7">
    <property type="entry name" value="LD18447P"/>
    <property type="match status" value="1"/>
</dbReference>
<dbReference type="Pfam" id="PF03462">
    <property type="entry name" value="PCRF"/>
    <property type="match status" value="1"/>
</dbReference>
<dbReference type="Pfam" id="PF00472">
    <property type="entry name" value="RF-1"/>
    <property type="match status" value="1"/>
</dbReference>
<dbReference type="SMART" id="SM00937">
    <property type="entry name" value="PCRF"/>
    <property type="match status" value="1"/>
</dbReference>
<dbReference type="SUPFAM" id="SSF75620">
    <property type="entry name" value="Release factor"/>
    <property type="match status" value="1"/>
</dbReference>
<dbReference type="PROSITE" id="PS00745">
    <property type="entry name" value="RF_PROK_I"/>
    <property type="match status" value="1"/>
</dbReference>
<protein>
    <recommendedName>
        <fullName evidence="1">Peptide chain release factor 1</fullName>
        <shortName evidence="1">RF-1</shortName>
    </recommendedName>
</protein>
<evidence type="ECO:0000255" key="1">
    <source>
        <dbReference type="HAMAP-Rule" id="MF_00093"/>
    </source>
</evidence>
<sequence>MGLDDRLDRIVARSEELQAALAEGLVGEAFAKASREYAELEPIVDRIGELRLAEQEERQSQALLADPEMRELAEAELEDLRARIPVLRQDIRIAMLPRDEADERSAILEIRPAAGGDEAALFAAELFDAYRRYAALRGWRFEIMEFDESELGGLREGIANITGRGVFARLKYESGVHRVQRVPATESQGRIHTSTVTVAVLPEAGDVDVQINDGDLRIDVYRASGAGGQHVNKTESAVRITHLPTGLVVAMQEEKSQHKNRAKAMKILMARLYERERAAAHATRAADRKSQVGTGDRSERIRTYNFPQGRVTDHRINLTAYKIDRVMMGEFDEFVDALTQDEQASLLAAEGL</sequence>
<gene>
    <name evidence="1" type="primary">prfA</name>
    <name type="ordered locus">GDI1915</name>
    <name type="ordered locus">Gdia_0137</name>
</gene>
<comment type="function">
    <text evidence="1">Peptide chain release factor 1 directs the termination of translation in response to the peptide chain termination codons UAG and UAA.</text>
</comment>
<comment type="subcellular location">
    <subcellularLocation>
        <location evidence="1">Cytoplasm</location>
    </subcellularLocation>
</comment>
<comment type="PTM">
    <text evidence="1">Methylated by PrmC. Methylation increases the termination efficiency of RF1.</text>
</comment>
<comment type="similarity">
    <text evidence="1">Belongs to the prokaryotic/mitochondrial release factor family.</text>
</comment>
<name>RF1_GLUDA</name>
<feature type="chain" id="PRO_1000075499" description="Peptide chain release factor 1">
    <location>
        <begin position="1"/>
        <end position="352"/>
    </location>
</feature>
<feature type="modified residue" description="N5-methylglutamine" evidence="1">
    <location>
        <position position="229"/>
    </location>
</feature>
<keyword id="KW-0963">Cytoplasm</keyword>
<keyword id="KW-0488">Methylation</keyword>
<keyword id="KW-0648">Protein biosynthesis</keyword>
<keyword id="KW-1185">Reference proteome</keyword>